<dbReference type="EC" id="3.4.19.12" evidence="2"/>
<dbReference type="EMBL" id="AK155761">
    <property type="protein sequence ID" value="BAE33424.1"/>
    <property type="molecule type" value="mRNA"/>
</dbReference>
<dbReference type="EMBL" id="AK169134">
    <property type="protein sequence ID" value="BAE40913.1"/>
    <property type="molecule type" value="mRNA"/>
</dbReference>
<dbReference type="EMBL" id="AK166445">
    <property type="protein sequence ID" value="BAE38781.1"/>
    <property type="molecule type" value="mRNA"/>
</dbReference>
<dbReference type="EMBL" id="AK172229">
    <property type="protein sequence ID" value="BAE42895.1"/>
    <property type="molecule type" value="mRNA"/>
</dbReference>
<dbReference type="EMBL" id="AK172338">
    <property type="protein sequence ID" value="BAE42955.1"/>
    <property type="molecule type" value="mRNA"/>
</dbReference>
<dbReference type="EMBL" id="AL831792">
    <property type="status" value="NOT_ANNOTATED_CDS"/>
    <property type="molecule type" value="Genomic_DNA"/>
</dbReference>
<dbReference type="EMBL" id="CH466538">
    <property type="protein sequence ID" value="EDL05608.1"/>
    <property type="molecule type" value="Genomic_DNA"/>
</dbReference>
<dbReference type="EMBL" id="BC031474">
    <property type="protein sequence ID" value="AAH31474.1"/>
    <property type="molecule type" value="mRNA"/>
</dbReference>
<dbReference type="EMBL" id="BC087552">
    <property type="protein sequence ID" value="AAH87552.1"/>
    <property type="molecule type" value="mRNA"/>
</dbReference>
<dbReference type="CCDS" id="CCDS17980.3"/>
<dbReference type="RefSeq" id="NP_690025.3">
    <property type="nucleotide sequence ID" value="NM_152812.5"/>
</dbReference>
<dbReference type="SMR" id="Q8K2H2"/>
<dbReference type="BioGRID" id="215215">
    <property type="interactions" value="7"/>
</dbReference>
<dbReference type="FunCoup" id="Q8K2H2">
    <property type="interactions" value="1982"/>
</dbReference>
<dbReference type="STRING" id="10090.ENSMUSP00000157661"/>
<dbReference type="MEROPS" id="C85.009"/>
<dbReference type="iPTMnet" id="Q8K2H2"/>
<dbReference type="PhosphoSitePlus" id="Q8K2H2"/>
<dbReference type="jPOST" id="Q8K2H2"/>
<dbReference type="PaxDb" id="10090-ENSMUSP00000113553"/>
<dbReference type="PeptideAtlas" id="Q8K2H2"/>
<dbReference type="ProteomicsDB" id="294403"/>
<dbReference type="Pumba" id="Q8K2H2"/>
<dbReference type="Antibodypedia" id="12759">
    <property type="antibodies" value="150 antibodies from 23 providers"/>
</dbReference>
<dbReference type="DNASU" id="72201"/>
<dbReference type="Ensembl" id="ENSMUST00000117268.9">
    <property type="protein sequence ID" value="ENSMUSP00000113553.3"/>
    <property type="gene ID" value="ENSMUSG00000040550.18"/>
</dbReference>
<dbReference type="GeneID" id="72201"/>
<dbReference type="KEGG" id="mmu:72201"/>
<dbReference type="AGR" id="MGI:1919451"/>
<dbReference type="CTD" id="51633"/>
<dbReference type="MGI" id="MGI:1919451">
    <property type="gene designation" value="Otud6b"/>
</dbReference>
<dbReference type="VEuPathDB" id="HostDB:ENSMUSG00000040550"/>
<dbReference type="eggNOG" id="KOG2606">
    <property type="taxonomic scope" value="Eukaryota"/>
</dbReference>
<dbReference type="GeneTree" id="ENSGT00390000012840"/>
<dbReference type="InParanoid" id="Q8K2H2"/>
<dbReference type="OrthoDB" id="415023at2759"/>
<dbReference type="TreeFam" id="TF315010"/>
<dbReference type="BioGRID-ORCS" id="72201">
    <property type="hits" value="3 hits in 76 CRISPR screens"/>
</dbReference>
<dbReference type="ChiTaRS" id="Otud6b">
    <property type="organism name" value="mouse"/>
</dbReference>
<dbReference type="PRO" id="PR:Q8K2H2"/>
<dbReference type="Proteomes" id="UP000000589">
    <property type="component" value="Chromosome 4"/>
</dbReference>
<dbReference type="RNAct" id="Q8K2H2">
    <property type="molecule type" value="protein"/>
</dbReference>
<dbReference type="Bgee" id="ENSMUSG00000040550">
    <property type="expression patterns" value="Expressed in ectoplacental cone and 100 other cell types or tissues"/>
</dbReference>
<dbReference type="ExpressionAtlas" id="Q8K2H2">
    <property type="expression patterns" value="baseline and differential"/>
</dbReference>
<dbReference type="GO" id="GO:0004843">
    <property type="term" value="F:cysteine-type deubiquitinase activity"/>
    <property type="evidence" value="ECO:0000250"/>
    <property type="project" value="UniProtKB"/>
</dbReference>
<dbReference type="GO" id="GO:0043248">
    <property type="term" value="P:proteasome assembly"/>
    <property type="evidence" value="ECO:0000250"/>
    <property type="project" value="UniProtKB"/>
</dbReference>
<dbReference type="GO" id="GO:0016579">
    <property type="term" value="P:protein deubiquitination"/>
    <property type="evidence" value="ECO:0000250"/>
    <property type="project" value="UniProtKB"/>
</dbReference>
<dbReference type="GO" id="GO:0006508">
    <property type="term" value="P:proteolysis"/>
    <property type="evidence" value="ECO:0007669"/>
    <property type="project" value="UniProtKB-KW"/>
</dbReference>
<dbReference type="CDD" id="cd22761">
    <property type="entry name" value="OTU_OTUD6"/>
    <property type="match status" value="1"/>
</dbReference>
<dbReference type="FunFam" id="3.90.70.80:FF:000003">
    <property type="entry name" value="OTU domain-containing protein 6B"/>
    <property type="match status" value="1"/>
</dbReference>
<dbReference type="Gene3D" id="3.90.70.80">
    <property type="match status" value="1"/>
</dbReference>
<dbReference type="InterPro" id="IPR003323">
    <property type="entry name" value="OTU_dom"/>
</dbReference>
<dbReference type="InterPro" id="IPR049772">
    <property type="entry name" value="OTU_OTUD6"/>
</dbReference>
<dbReference type="InterPro" id="IPR038765">
    <property type="entry name" value="Papain-like_cys_pep_sf"/>
</dbReference>
<dbReference type="InterPro" id="IPR050704">
    <property type="entry name" value="Peptidase_C85-like"/>
</dbReference>
<dbReference type="PANTHER" id="PTHR12419:SF21">
    <property type="entry name" value="DEUBIQUITINASE OTUD6B"/>
    <property type="match status" value="1"/>
</dbReference>
<dbReference type="PANTHER" id="PTHR12419">
    <property type="entry name" value="OTU DOMAIN CONTAINING PROTEIN"/>
    <property type="match status" value="1"/>
</dbReference>
<dbReference type="Pfam" id="PF02338">
    <property type="entry name" value="OTU"/>
    <property type="match status" value="1"/>
</dbReference>
<dbReference type="SUPFAM" id="SSF54001">
    <property type="entry name" value="Cysteine proteinases"/>
    <property type="match status" value="1"/>
</dbReference>
<dbReference type="PROSITE" id="PS50802">
    <property type="entry name" value="OTU"/>
    <property type="match status" value="1"/>
</dbReference>
<protein>
    <recommendedName>
        <fullName evidence="6">Deubiquitinase OTUD6B</fullName>
    </recommendedName>
    <alternativeName>
        <fullName evidence="7">OTU domain-containing protein 6B</fullName>
        <ecNumber evidence="2">3.4.19.12</ecNumber>
    </alternativeName>
</protein>
<keyword id="KW-0007">Acetylation</keyword>
<keyword id="KW-0378">Hydrolase</keyword>
<keyword id="KW-0645">Protease</keyword>
<keyword id="KW-1185">Reference proteome</keyword>
<keyword id="KW-0788">Thiol protease</keyword>
<keyword id="KW-0833">Ubl conjugation pathway</keyword>
<accession>Q8K2H2</accession>
<accession>A2AP24</accession>
<accession>Q3T9X5</accession>
<accession>Q3U1R9</accession>
<reference key="1">
    <citation type="journal article" date="2005" name="Science">
        <title>The transcriptional landscape of the mammalian genome.</title>
        <authorList>
            <person name="Carninci P."/>
            <person name="Kasukawa T."/>
            <person name="Katayama S."/>
            <person name="Gough J."/>
            <person name="Frith M.C."/>
            <person name="Maeda N."/>
            <person name="Oyama R."/>
            <person name="Ravasi T."/>
            <person name="Lenhard B."/>
            <person name="Wells C."/>
            <person name="Kodzius R."/>
            <person name="Shimokawa K."/>
            <person name="Bajic V.B."/>
            <person name="Brenner S.E."/>
            <person name="Batalov S."/>
            <person name="Forrest A.R."/>
            <person name="Zavolan M."/>
            <person name="Davis M.J."/>
            <person name="Wilming L.G."/>
            <person name="Aidinis V."/>
            <person name="Allen J.E."/>
            <person name="Ambesi-Impiombato A."/>
            <person name="Apweiler R."/>
            <person name="Aturaliya R.N."/>
            <person name="Bailey T.L."/>
            <person name="Bansal M."/>
            <person name="Baxter L."/>
            <person name="Beisel K.W."/>
            <person name="Bersano T."/>
            <person name="Bono H."/>
            <person name="Chalk A.M."/>
            <person name="Chiu K.P."/>
            <person name="Choudhary V."/>
            <person name="Christoffels A."/>
            <person name="Clutterbuck D.R."/>
            <person name="Crowe M.L."/>
            <person name="Dalla E."/>
            <person name="Dalrymple B.P."/>
            <person name="de Bono B."/>
            <person name="Della Gatta G."/>
            <person name="di Bernardo D."/>
            <person name="Down T."/>
            <person name="Engstrom P."/>
            <person name="Fagiolini M."/>
            <person name="Faulkner G."/>
            <person name="Fletcher C.F."/>
            <person name="Fukushima T."/>
            <person name="Furuno M."/>
            <person name="Futaki S."/>
            <person name="Gariboldi M."/>
            <person name="Georgii-Hemming P."/>
            <person name="Gingeras T.R."/>
            <person name="Gojobori T."/>
            <person name="Green R.E."/>
            <person name="Gustincich S."/>
            <person name="Harbers M."/>
            <person name="Hayashi Y."/>
            <person name="Hensch T.K."/>
            <person name="Hirokawa N."/>
            <person name="Hill D."/>
            <person name="Huminiecki L."/>
            <person name="Iacono M."/>
            <person name="Ikeo K."/>
            <person name="Iwama A."/>
            <person name="Ishikawa T."/>
            <person name="Jakt M."/>
            <person name="Kanapin A."/>
            <person name="Katoh M."/>
            <person name="Kawasawa Y."/>
            <person name="Kelso J."/>
            <person name="Kitamura H."/>
            <person name="Kitano H."/>
            <person name="Kollias G."/>
            <person name="Krishnan S.P."/>
            <person name="Kruger A."/>
            <person name="Kummerfeld S.K."/>
            <person name="Kurochkin I.V."/>
            <person name="Lareau L.F."/>
            <person name="Lazarevic D."/>
            <person name="Lipovich L."/>
            <person name="Liu J."/>
            <person name="Liuni S."/>
            <person name="McWilliam S."/>
            <person name="Madan Babu M."/>
            <person name="Madera M."/>
            <person name="Marchionni L."/>
            <person name="Matsuda H."/>
            <person name="Matsuzawa S."/>
            <person name="Miki H."/>
            <person name="Mignone F."/>
            <person name="Miyake S."/>
            <person name="Morris K."/>
            <person name="Mottagui-Tabar S."/>
            <person name="Mulder N."/>
            <person name="Nakano N."/>
            <person name="Nakauchi H."/>
            <person name="Ng P."/>
            <person name="Nilsson R."/>
            <person name="Nishiguchi S."/>
            <person name="Nishikawa S."/>
            <person name="Nori F."/>
            <person name="Ohara O."/>
            <person name="Okazaki Y."/>
            <person name="Orlando V."/>
            <person name="Pang K.C."/>
            <person name="Pavan W.J."/>
            <person name="Pavesi G."/>
            <person name="Pesole G."/>
            <person name="Petrovsky N."/>
            <person name="Piazza S."/>
            <person name="Reed J."/>
            <person name="Reid J.F."/>
            <person name="Ring B.Z."/>
            <person name="Ringwald M."/>
            <person name="Rost B."/>
            <person name="Ruan Y."/>
            <person name="Salzberg S.L."/>
            <person name="Sandelin A."/>
            <person name="Schneider C."/>
            <person name="Schoenbach C."/>
            <person name="Sekiguchi K."/>
            <person name="Semple C.A."/>
            <person name="Seno S."/>
            <person name="Sessa L."/>
            <person name="Sheng Y."/>
            <person name="Shibata Y."/>
            <person name="Shimada H."/>
            <person name="Shimada K."/>
            <person name="Silva D."/>
            <person name="Sinclair B."/>
            <person name="Sperling S."/>
            <person name="Stupka E."/>
            <person name="Sugiura K."/>
            <person name="Sultana R."/>
            <person name="Takenaka Y."/>
            <person name="Taki K."/>
            <person name="Tammoja K."/>
            <person name="Tan S.L."/>
            <person name="Tang S."/>
            <person name="Taylor M.S."/>
            <person name="Tegner J."/>
            <person name="Teichmann S.A."/>
            <person name="Ueda H.R."/>
            <person name="van Nimwegen E."/>
            <person name="Verardo R."/>
            <person name="Wei C.L."/>
            <person name="Yagi K."/>
            <person name="Yamanishi H."/>
            <person name="Zabarovsky E."/>
            <person name="Zhu S."/>
            <person name="Zimmer A."/>
            <person name="Hide W."/>
            <person name="Bult C."/>
            <person name="Grimmond S.M."/>
            <person name="Teasdale R.D."/>
            <person name="Liu E.T."/>
            <person name="Brusic V."/>
            <person name="Quackenbush J."/>
            <person name="Wahlestedt C."/>
            <person name="Mattick J.S."/>
            <person name="Hume D.A."/>
            <person name="Kai C."/>
            <person name="Sasaki D."/>
            <person name="Tomaru Y."/>
            <person name="Fukuda S."/>
            <person name="Kanamori-Katayama M."/>
            <person name="Suzuki M."/>
            <person name="Aoki J."/>
            <person name="Arakawa T."/>
            <person name="Iida J."/>
            <person name="Imamura K."/>
            <person name="Itoh M."/>
            <person name="Kato T."/>
            <person name="Kawaji H."/>
            <person name="Kawagashira N."/>
            <person name="Kawashima T."/>
            <person name="Kojima M."/>
            <person name="Kondo S."/>
            <person name="Konno H."/>
            <person name="Nakano K."/>
            <person name="Ninomiya N."/>
            <person name="Nishio T."/>
            <person name="Okada M."/>
            <person name="Plessy C."/>
            <person name="Shibata K."/>
            <person name="Shiraki T."/>
            <person name="Suzuki S."/>
            <person name="Tagami M."/>
            <person name="Waki K."/>
            <person name="Watahiki A."/>
            <person name="Okamura-Oho Y."/>
            <person name="Suzuki H."/>
            <person name="Kawai J."/>
            <person name="Hayashizaki Y."/>
        </authorList>
    </citation>
    <scope>NUCLEOTIDE SEQUENCE [LARGE SCALE MRNA]</scope>
    <source>
        <strain>C57BL/6J</strain>
        <strain>NOD</strain>
        <tissue>Liver</tissue>
        <tissue>Mammary gland</tissue>
        <tissue>Spleen</tissue>
    </source>
</reference>
<reference key="2">
    <citation type="journal article" date="2009" name="PLoS Biol.">
        <title>Lineage-specific biology revealed by a finished genome assembly of the mouse.</title>
        <authorList>
            <person name="Church D.M."/>
            <person name="Goodstadt L."/>
            <person name="Hillier L.W."/>
            <person name="Zody M.C."/>
            <person name="Goldstein S."/>
            <person name="She X."/>
            <person name="Bult C.J."/>
            <person name="Agarwala R."/>
            <person name="Cherry J.L."/>
            <person name="DiCuccio M."/>
            <person name="Hlavina W."/>
            <person name="Kapustin Y."/>
            <person name="Meric P."/>
            <person name="Maglott D."/>
            <person name="Birtle Z."/>
            <person name="Marques A.C."/>
            <person name="Graves T."/>
            <person name="Zhou S."/>
            <person name="Teague B."/>
            <person name="Potamousis K."/>
            <person name="Churas C."/>
            <person name="Place M."/>
            <person name="Herschleb J."/>
            <person name="Runnheim R."/>
            <person name="Forrest D."/>
            <person name="Amos-Landgraf J."/>
            <person name="Schwartz D.C."/>
            <person name="Cheng Z."/>
            <person name="Lindblad-Toh K."/>
            <person name="Eichler E.E."/>
            <person name="Ponting C.P."/>
        </authorList>
    </citation>
    <scope>NUCLEOTIDE SEQUENCE [LARGE SCALE GENOMIC DNA]</scope>
    <source>
        <strain>C57BL/6J</strain>
    </source>
</reference>
<reference key="3">
    <citation type="submission" date="2005-07" db="EMBL/GenBank/DDBJ databases">
        <authorList>
            <person name="Mural R.J."/>
            <person name="Adams M.D."/>
            <person name="Myers E.W."/>
            <person name="Smith H.O."/>
            <person name="Venter J.C."/>
        </authorList>
    </citation>
    <scope>NUCLEOTIDE SEQUENCE [LARGE SCALE GENOMIC DNA]</scope>
</reference>
<reference key="4">
    <citation type="journal article" date="2004" name="Genome Res.">
        <title>The status, quality, and expansion of the NIH full-length cDNA project: the Mammalian Gene Collection (MGC).</title>
        <authorList>
            <consortium name="The MGC Project Team"/>
        </authorList>
    </citation>
    <scope>NUCLEOTIDE SEQUENCE [LARGE SCALE MRNA]</scope>
    <source>
        <strain>FVB/N</strain>
        <tissue>Embryo</tissue>
        <tissue>Mammary tumor</tissue>
    </source>
</reference>
<reference key="5">
    <citation type="journal article" date="2010" name="Cell">
        <title>A tissue-specific atlas of mouse protein phosphorylation and expression.</title>
        <authorList>
            <person name="Huttlin E.L."/>
            <person name="Jedrychowski M.P."/>
            <person name="Elias J.E."/>
            <person name="Goswami T."/>
            <person name="Rad R."/>
            <person name="Beausoleil S.A."/>
            <person name="Villen J."/>
            <person name="Haas W."/>
            <person name="Sowa M.E."/>
            <person name="Gygi S.P."/>
        </authorList>
    </citation>
    <scope>IDENTIFICATION BY MASS SPECTROMETRY [LARGE SCALE ANALYSIS]</scope>
    <source>
        <tissue>Brain</tissue>
        <tissue>Heart</tissue>
        <tissue>Kidney</tissue>
        <tissue>Liver</tissue>
        <tissue>Lung</tissue>
        <tissue>Pancreas</tissue>
        <tissue>Spleen</tissue>
        <tissue>Testis</tissue>
    </source>
</reference>
<reference key="6">
    <citation type="journal article" date="2011" name="PLoS ONE">
        <title>Evidence for OTUD-6B participation in B lymphocytes cell cycle after cytokine stimulation.</title>
        <authorList>
            <person name="Xu Z."/>
            <person name="Zheng Y."/>
            <person name="Zhu Y."/>
            <person name="Kong X."/>
            <person name="Hu L."/>
        </authorList>
    </citation>
    <scope>TISSUE SPECIFICITY</scope>
    <scope>INDUCTION BY CYTOKINES</scope>
</reference>
<reference key="7">
    <citation type="journal article" date="2017" name="Am. J. Hum. Genet.">
        <title>Biallelic variants in OTUD6B cause an intellectual disability syndrome associated with seizures and dysmorphic features.</title>
        <authorList>
            <consortium name="EuroEPINOMICS RES Consortium Autosomal Recessive working group, S. Hande Caglayan"/>
            <person name="Santiago-Sim T."/>
            <person name="Burrage L.C."/>
            <person name="Ebstein F."/>
            <person name="Tokita M.J."/>
            <person name="Miller M."/>
            <person name="Bi W."/>
            <person name="Braxton A.A."/>
            <person name="Rosenfeld J.A."/>
            <person name="Shahrour M."/>
            <person name="Lehmann A."/>
            <person name="Cogne B."/>
            <person name="Kuery S."/>
            <person name="Besnard T."/>
            <person name="Isidor B."/>
            <person name="Bezieau S."/>
            <person name="Hazart I."/>
            <person name="Nagakura H."/>
            <person name="Immken L.L."/>
            <person name="Littlejohn R.O."/>
            <person name="Roeder E."/>
            <person name="Kara B."/>
            <person name="Hardies K."/>
            <person name="Weckhuysen S."/>
            <person name="May P."/>
            <person name="Lemke J.R."/>
            <person name="Elpeleg O."/>
            <person name="Abu-Libdeh B."/>
            <person name="James K.N."/>
            <person name="Silhavy J.L."/>
            <person name="Issa M.Y."/>
            <person name="Zaki M.S."/>
            <person name="Gleeson J.G."/>
            <person name="Seavitt J.R."/>
            <person name="Dickinson M.E."/>
            <person name="Ljungberg M.C."/>
            <person name="Wells S."/>
            <person name="Johnson S.J."/>
            <person name="Teboul L."/>
            <person name="Eng C.M."/>
            <person name="Yang Y."/>
            <person name="Kloetzel P.M."/>
            <person name="Heaney J.D."/>
            <person name="Walkiewicz M.A."/>
        </authorList>
    </citation>
    <scope>TISSUE SPECIFICITY</scope>
    <scope>DISRUPTION PHENOTYPE</scope>
</reference>
<name>OTU6B_MOUSE</name>
<organism>
    <name type="scientific">Mus musculus</name>
    <name type="common">Mouse</name>
    <dbReference type="NCBI Taxonomy" id="10090"/>
    <lineage>
        <taxon>Eukaryota</taxon>
        <taxon>Metazoa</taxon>
        <taxon>Chordata</taxon>
        <taxon>Craniata</taxon>
        <taxon>Vertebrata</taxon>
        <taxon>Euteleostomi</taxon>
        <taxon>Mammalia</taxon>
        <taxon>Eutheria</taxon>
        <taxon>Euarchontoglires</taxon>
        <taxon>Glires</taxon>
        <taxon>Rodentia</taxon>
        <taxon>Myomorpha</taxon>
        <taxon>Muroidea</taxon>
        <taxon>Muridae</taxon>
        <taxon>Murinae</taxon>
        <taxon>Mus</taxon>
        <taxon>Mus</taxon>
    </lineage>
</organism>
<feature type="chain" id="PRO_0000076280" description="Deubiquitinase OTUD6B">
    <location>
        <begin position="1"/>
        <end position="294"/>
    </location>
</feature>
<feature type="domain" description="OTU" evidence="3">
    <location>
        <begin position="148"/>
        <end position="285"/>
    </location>
</feature>
<feature type="region of interest" description="Cys-loop" evidence="1">
    <location>
        <begin position="153"/>
        <end position="159"/>
    </location>
</feature>
<feature type="region of interest" description="Variable-loop" evidence="1">
    <location>
        <begin position="220"/>
        <end position="230"/>
    </location>
</feature>
<feature type="region of interest" description="His-loop" evidence="1">
    <location>
        <begin position="268"/>
        <end position="278"/>
    </location>
</feature>
<feature type="active site" evidence="1">
    <location>
        <position position="156"/>
    </location>
</feature>
<feature type="active site" description="Nucleophile" evidence="2">
    <location>
        <position position="159"/>
    </location>
</feature>
<feature type="active site" evidence="1">
    <location>
        <position position="278"/>
    </location>
</feature>
<feature type="modified residue" description="N-acetylmethionine" evidence="2">
    <location>
        <position position="1"/>
    </location>
</feature>
<feature type="sequence conflict" description="In Ref. 1; BAE33424." evidence="6" ref="1">
    <original>A</original>
    <variation>T</variation>
    <location>
        <position position="53"/>
    </location>
</feature>
<feature type="sequence conflict" description="In Ref. 1; BAE42955/BAE42895/BAE38781 and 3; EDL05608." evidence="6" ref="1 3">
    <original>T</original>
    <variation>S</variation>
    <location>
        <position position="190"/>
    </location>
</feature>
<gene>
    <name evidence="7" type="primary">Otud6b</name>
</gene>
<comment type="function">
    <text evidence="2">Deubiquitinating enzyme that may play a role in the ubiquitin-dependent regulation of protein synthesis, downstream of mTORC1 (By similarity). May associate with the protein synthesis initiation complex and modify its ubiquitination to repress translation (By similarity). May also repress DNA synthesis and modify different cellular targets thereby regulating cell growth and proliferation (By similarity). May also play a role in proteasome assembly and function (By similarity).</text>
</comment>
<comment type="catalytic activity">
    <reaction evidence="2">
        <text>Thiol-dependent hydrolysis of ester, thioester, amide, peptide and isopeptide bonds formed by the C-terminal Gly of ubiquitin (a 76-residue protein attached to proteins as an intracellular targeting signal).</text>
        <dbReference type="EC" id="3.4.19.12"/>
    </reaction>
</comment>
<comment type="subunit">
    <text evidence="2">Interacts with the eukaryotic translation initiation factor 4F complex.</text>
</comment>
<comment type="tissue specificity">
    <text evidence="4 5">Ubiquitously expressed. Expression is observed in several organ systems including the cardiovascular, digestive, central and peripheral nervous and musculoskeletal systems.</text>
</comment>
<comment type="induction">
    <text evidence="4">Up-regulated by cytokines but followed by a rapid decline in B lymphocytes.</text>
</comment>
<comment type="disruption phenotype">
    <text evidence="5">Mice are sub-viable and die between embryonic day 18.5 and shortly after birth. They show intrauterine growth retardation and a high percentage of ventricular septal cardiac defects.</text>
</comment>
<evidence type="ECO:0000250" key="1"/>
<evidence type="ECO:0000250" key="2">
    <source>
        <dbReference type="UniProtKB" id="Q8N6M0"/>
    </source>
</evidence>
<evidence type="ECO:0000255" key="3">
    <source>
        <dbReference type="PROSITE-ProRule" id="PRU00139"/>
    </source>
</evidence>
<evidence type="ECO:0000269" key="4">
    <source>
    </source>
</evidence>
<evidence type="ECO:0000269" key="5">
    <source>
    </source>
</evidence>
<evidence type="ECO:0000305" key="6"/>
<evidence type="ECO:0000312" key="7">
    <source>
        <dbReference type="MGI" id="MGI:1919451"/>
    </source>
</evidence>
<sequence>MEEVVAEELDDEEQLVRRHRKEKKELQAKIQGMKNAVPKNDKKRRKQLTEDVAKLEREMEQKHREELEQLKQLTFKDSKIDSVAVNISNLVLENQPPRISKAQKRREKKAALEKEREERIAEAEIENLSGARHLESEKLAQILAARELEIKQIPSDGHCMYGALEDQLREQDCALTVASLRRQTAEYMQTHSDDFLPFLTNPSTGDMYTPEEFGKYCDDIVNTAAWGGQLELRALSHILQTPIEILQADAPPIIVGEEYPRNPLVLVYMRHAYGLGEHYNSVTRLVNSATENCS</sequence>
<proteinExistence type="evidence at protein level"/>